<dbReference type="EMBL" id="AAGW02071750">
    <property type="status" value="NOT_ANNOTATED_CDS"/>
    <property type="molecule type" value="Genomic_DNA"/>
</dbReference>
<dbReference type="RefSeq" id="XP_002711434.1">
    <property type="nucleotide sequence ID" value="XM_002711388.5"/>
</dbReference>
<dbReference type="PDB" id="3JAG">
    <property type="method" value="EM"/>
    <property type="resolution" value="3.65 A"/>
    <property type="chains" value="B=2-395"/>
</dbReference>
<dbReference type="PDB" id="3JAH">
    <property type="method" value="EM"/>
    <property type="resolution" value="3.45 A"/>
    <property type="chains" value="B=2-395"/>
</dbReference>
<dbReference type="PDB" id="3JAI">
    <property type="method" value="EM"/>
    <property type="resolution" value="3.65 A"/>
    <property type="chains" value="B=2-395"/>
</dbReference>
<dbReference type="PDB" id="5LZS">
    <property type="method" value="EM"/>
    <property type="resolution" value="3.31 A"/>
    <property type="chains" value="B=1-403"/>
</dbReference>
<dbReference type="PDB" id="5LZT">
    <property type="method" value="EM"/>
    <property type="resolution" value="3.65 A"/>
    <property type="chains" value="B=1-403"/>
</dbReference>
<dbReference type="PDB" id="5LZU">
    <property type="method" value="EM"/>
    <property type="resolution" value="3.75 A"/>
    <property type="chains" value="B=1-403"/>
</dbReference>
<dbReference type="PDB" id="5LZV">
    <property type="method" value="EM"/>
    <property type="resolution" value="3.35 A"/>
    <property type="chains" value="B=1-403"/>
</dbReference>
<dbReference type="PDB" id="5LZW">
    <property type="method" value="EM"/>
    <property type="resolution" value="3.53 A"/>
    <property type="chains" value="B=1-403"/>
</dbReference>
<dbReference type="PDB" id="5LZX">
    <property type="method" value="EM"/>
    <property type="resolution" value="3.67 A"/>
    <property type="chains" value="B=1-403"/>
</dbReference>
<dbReference type="PDB" id="5LZY">
    <property type="method" value="EM"/>
    <property type="resolution" value="3.99 A"/>
    <property type="chains" value="B=1-403"/>
</dbReference>
<dbReference type="PDB" id="5LZZ">
    <property type="method" value="EM"/>
    <property type="resolution" value="3.47 A"/>
    <property type="chains" value="B=1-403"/>
</dbReference>
<dbReference type="PDB" id="6D90">
    <property type="method" value="EM"/>
    <property type="resolution" value="3.20 A"/>
    <property type="chains" value="B=1-403"/>
</dbReference>
<dbReference type="PDB" id="6D9J">
    <property type="method" value="EM"/>
    <property type="resolution" value="3.20 A"/>
    <property type="chains" value="B=1-403"/>
</dbReference>
<dbReference type="PDB" id="6FTG">
    <property type="method" value="EM"/>
    <property type="resolution" value="9.10 A"/>
    <property type="chains" value="B=2-395"/>
</dbReference>
<dbReference type="PDB" id="6FTI">
    <property type="method" value="EM"/>
    <property type="resolution" value="4.20 A"/>
    <property type="chains" value="B=2-395"/>
</dbReference>
<dbReference type="PDB" id="6FTJ">
    <property type="method" value="EM"/>
    <property type="resolution" value="4.70 A"/>
    <property type="chains" value="B=2-395"/>
</dbReference>
<dbReference type="PDB" id="6HCF">
    <property type="method" value="EM"/>
    <property type="resolution" value="3.90 A"/>
    <property type="chains" value="B3=1-403"/>
</dbReference>
<dbReference type="PDB" id="6HCJ">
    <property type="method" value="EM"/>
    <property type="resolution" value="3.80 A"/>
    <property type="chains" value="B3=1-403"/>
</dbReference>
<dbReference type="PDB" id="6HCM">
    <property type="method" value="EM"/>
    <property type="resolution" value="6.80 A"/>
    <property type="chains" value="B3=1-403"/>
</dbReference>
<dbReference type="PDB" id="6HCQ">
    <property type="method" value="EM"/>
    <property type="resolution" value="6.50 A"/>
    <property type="chains" value="B3=1-403"/>
</dbReference>
<dbReference type="PDB" id="6MTB">
    <property type="method" value="EM"/>
    <property type="resolution" value="3.60 A"/>
    <property type="chains" value="B=2-395"/>
</dbReference>
<dbReference type="PDB" id="6MTC">
    <property type="method" value="EM"/>
    <property type="resolution" value="3.40 A"/>
    <property type="chains" value="B=2-395"/>
</dbReference>
<dbReference type="PDB" id="6MTD">
    <property type="method" value="EM"/>
    <property type="resolution" value="3.30 A"/>
    <property type="chains" value="B=2-395"/>
</dbReference>
<dbReference type="PDB" id="6MTE">
    <property type="method" value="EM"/>
    <property type="resolution" value="3.40 A"/>
    <property type="chains" value="B=2-395"/>
</dbReference>
<dbReference type="PDB" id="6P5I">
    <property type="method" value="EM"/>
    <property type="resolution" value="3.10 A"/>
    <property type="chains" value="AB=1-403"/>
</dbReference>
<dbReference type="PDB" id="6P5J">
    <property type="method" value="EM"/>
    <property type="resolution" value="3.10 A"/>
    <property type="chains" value="AB=2-403"/>
</dbReference>
<dbReference type="PDB" id="6P5N">
    <property type="method" value="EM"/>
    <property type="resolution" value="3.20 A"/>
    <property type="chains" value="AB=2-403"/>
</dbReference>
<dbReference type="PDB" id="6R5Q">
    <property type="method" value="EM"/>
    <property type="resolution" value="3.00 A"/>
    <property type="chains" value="B=2-395"/>
</dbReference>
<dbReference type="PDB" id="6R6G">
    <property type="method" value="EM"/>
    <property type="resolution" value="3.70 A"/>
    <property type="chains" value="B=2-395"/>
</dbReference>
<dbReference type="PDB" id="6R6P">
    <property type="method" value="EM"/>
    <property type="resolution" value="3.10 A"/>
    <property type="chains" value="B=2-395"/>
</dbReference>
<dbReference type="PDB" id="6R7Q">
    <property type="method" value="EM"/>
    <property type="resolution" value="3.90 A"/>
    <property type="chains" value="B=2-395"/>
</dbReference>
<dbReference type="PDB" id="6SGC">
    <property type="method" value="EM"/>
    <property type="resolution" value="2.80 A"/>
    <property type="chains" value="B2=1-403"/>
</dbReference>
<dbReference type="PDB" id="6T59">
    <property type="method" value="EM"/>
    <property type="resolution" value="3.11 A"/>
    <property type="chains" value="B3=1-403"/>
</dbReference>
<dbReference type="PDB" id="6ZVK">
    <property type="method" value="EM"/>
    <property type="resolution" value="3.49 A"/>
    <property type="chains" value="52=2-395"/>
</dbReference>
<dbReference type="PDB" id="7A01">
    <property type="method" value="EM"/>
    <property type="resolution" value="3.60 A"/>
    <property type="chains" value="52=2-395"/>
</dbReference>
<dbReference type="PDB" id="7MDZ">
    <property type="method" value="EM"/>
    <property type="resolution" value="3.20 A"/>
    <property type="chains" value="B=1-403"/>
</dbReference>
<dbReference type="PDB" id="7NFX">
    <property type="method" value="EM"/>
    <property type="resolution" value="3.20 A"/>
    <property type="chains" value="B=1-403"/>
</dbReference>
<dbReference type="PDB" id="7NWG">
    <property type="method" value="EM"/>
    <property type="resolution" value="3.80 A"/>
    <property type="chains" value="B3=1-403"/>
</dbReference>
<dbReference type="PDB" id="7NWH">
    <property type="method" value="EM"/>
    <property type="resolution" value="4.10 A"/>
    <property type="chains" value="B=2-403"/>
</dbReference>
<dbReference type="PDB" id="7NWI">
    <property type="method" value="EM"/>
    <property type="resolution" value="3.13 A"/>
    <property type="chains" value="B=1-403"/>
</dbReference>
<dbReference type="PDB" id="7O7Y">
    <property type="method" value="EM"/>
    <property type="resolution" value="2.20 A"/>
    <property type="chains" value="BB=1-403"/>
</dbReference>
<dbReference type="PDB" id="7O7Z">
    <property type="method" value="EM"/>
    <property type="resolution" value="2.40 A"/>
    <property type="chains" value="BB=1-403"/>
</dbReference>
<dbReference type="PDB" id="7O80">
    <property type="method" value="EM"/>
    <property type="resolution" value="2.90 A"/>
    <property type="chains" value="BB=1-403"/>
</dbReference>
<dbReference type="PDB" id="7O81">
    <property type="method" value="EM"/>
    <property type="resolution" value="3.10 A"/>
    <property type="chains" value="BB=1-403"/>
</dbReference>
<dbReference type="PDB" id="7OBR">
    <property type="method" value="EM"/>
    <property type="resolution" value="2.80 A"/>
    <property type="chains" value="B=2-403"/>
</dbReference>
<dbReference type="PDB" id="7OYD">
    <property type="method" value="EM"/>
    <property type="resolution" value="2.30 A"/>
    <property type="chains" value="B=1-403"/>
</dbReference>
<dbReference type="PDB" id="7QWQ">
    <property type="method" value="EM"/>
    <property type="resolution" value="2.83 A"/>
    <property type="chains" value="B=1-403"/>
</dbReference>
<dbReference type="PDB" id="7QWR">
    <property type="method" value="EM"/>
    <property type="resolution" value="2.90 A"/>
    <property type="chains" value="B=1-403"/>
</dbReference>
<dbReference type="PDB" id="7QWS">
    <property type="method" value="EM"/>
    <property type="resolution" value="3.40 A"/>
    <property type="chains" value="B=1-403"/>
</dbReference>
<dbReference type="PDB" id="7TM3">
    <property type="method" value="EM"/>
    <property type="resolution" value="3.25 A"/>
    <property type="chains" value="w=2-403"/>
</dbReference>
<dbReference type="PDB" id="7TOQ">
    <property type="method" value="EM"/>
    <property type="resolution" value="3.10 A"/>
    <property type="chains" value="AL03=2-395"/>
</dbReference>
<dbReference type="PDB" id="7TOR">
    <property type="method" value="EM"/>
    <property type="resolution" value="2.90 A"/>
    <property type="chains" value="AL03=2-395"/>
</dbReference>
<dbReference type="PDB" id="7TUT">
    <property type="method" value="EM"/>
    <property type="resolution" value="3.88 A"/>
    <property type="chains" value="w=2-403"/>
</dbReference>
<dbReference type="PDB" id="7UCJ">
    <property type="method" value="EM"/>
    <property type="resolution" value="3.10 A"/>
    <property type="chains" value="B=2-395"/>
</dbReference>
<dbReference type="PDB" id="7UCK">
    <property type="method" value="EM"/>
    <property type="resolution" value="2.80 A"/>
    <property type="chains" value="B=2-395"/>
</dbReference>
<dbReference type="PDB" id="7ZJW">
    <property type="method" value="EM"/>
    <property type="resolution" value="2.80 A"/>
    <property type="chains" value="LE=1-403"/>
</dbReference>
<dbReference type="PDB" id="7ZJX">
    <property type="method" value="EM"/>
    <property type="resolution" value="3.10 A"/>
    <property type="chains" value="LE=1-403"/>
</dbReference>
<dbReference type="PDB" id="8B5L">
    <property type="method" value="EM"/>
    <property type="resolution" value="2.86 A"/>
    <property type="chains" value="B=2-395"/>
</dbReference>
<dbReference type="PDB" id="8B6C">
    <property type="method" value="EM"/>
    <property type="resolution" value="2.79 A"/>
    <property type="chains" value="B=2-395"/>
</dbReference>
<dbReference type="PDB" id="8BHF">
    <property type="method" value="EM"/>
    <property type="resolution" value="3.10 A"/>
    <property type="chains" value="k3=2-395"/>
</dbReference>
<dbReference type="PDB" id="8BPO">
    <property type="method" value="EM"/>
    <property type="resolution" value="2.80 A"/>
    <property type="chains" value="B2=1-403"/>
</dbReference>
<dbReference type="PDB" id="8BTK">
    <property type="method" value="EM"/>
    <property type="resolution" value="3.50 A"/>
    <property type="chains" value="BB=1-403"/>
</dbReference>
<dbReference type="PDB" id="8P2K">
    <property type="method" value="EM"/>
    <property type="resolution" value="2.90 A"/>
    <property type="chains" value="BB=1-403"/>
</dbReference>
<dbReference type="PDB" id="8RJB">
    <property type="method" value="EM"/>
    <property type="resolution" value="2.69 A"/>
    <property type="chains" value="w=1-403"/>
</dbReference>
<dbReference type="PDB" id="8RJC">
    <property type="method" value="EM"/>
    <property type="resolution" value="2.90 A"/>
    <property type="chains" value="w=1-403"/>
</dbReference>
<dbReference type="PDB" id="8RJD">
    <property type="method" value="EM"/>
    <property type="resolution" value="2.79 A"/>
    <property type="chains" value="w=1-403"/>
</dbReference>
<dbReference type="PDB" id="8SCB">
    <property type="method" value="EM"/>
    <property type="resolution" value="2.50 A"/>
    <property type="chains" value="B=1-403"/>
</dbReference>
<dbReference type="PDB" id="8VFT">
    <property type="method" value="EM"/>
    <property type="resolution" value="3.30 A"/>
    <property type="chains" value="B=1-403"/>
</dbReference>
<dbReference type="PDB" id="9BDL">
    <property type="method" value="EM"/>
    <property type="resolution" value="2.80 A"/>
    <property type="chains" value="AL03=2-395"/>
</dbReference>
<dbReference type="PDB" id="9BDN">
    <property type="method" value="EM"/>
    <property type="resolution" value="3.10 A"/>
    <property type="chains" value="AL03=2-395"/>
</dbReference>
<dbReference type="PDB" id="9BDP">
    <property type="method" value="EM"/>
    <property type="resolution" value="3.70 A"/>
    <property type="chains" value="AL03=2-395"/>
</dbReference>
<dbReference type="PDB" id="9F1B">
    <property type="method" value="EM"/>
    <property type="resolution" value="3.01 A"/>
    <property type="chains" value="BB=1-403"/>
</dbReference>
<dbReference type="PDB" id="9F1C">
    <property type="method" value="EM"/>
    <property type="resolution" value="3.78 A"/>
    <property type="chains" value="BB=1-403"/>
</dbReference>
<dbReference type="PDB" id="9F1D">
    <property type="method" value="EM"/>
    <property type="resolution" value="3.26 A"/>
    <property type="chains" value="BB=1-403"/>
</dbReference>
<dbReference type="PDBsum" id="3JAG"/>
<dbReference type="PDBsum" id="3JAH"/>
<dbReference type="PDBsum" id="3JAI"/>
<dbReference type="PDBsum" id="5LZS"/>
<dbReference type="PDBsum" id="5LZT"/>
<dbReference type="PDBsum" id="5LZU"/>
<dbReference type="PDBsum" id="5LZV"/>
<dbReference type="PDBsum" id="5LZW"/>
<dbReference type="PDBsum" id="5LZX"/>
<dbReference type="PDBsum" id="5LZY"/>
<dbReference type="PDBsum" id="5LZZ"/>
<dbReference type="PDBsum" id="6D90"/>
<dbReference type="PDBsum" id="6D9J"/>
<dbReference type="PDBsum" id="6FTG"/>
<dbReference type="PDBsum" id="6FTI"/>
<dbReference type="PDBsum" id="6FTJ"/>
<dbReference type="PDBsum" id="6HCF"/>
<dbReference type="PDBsum" id="6HCJ"/>
<dbReference type="PDBsum" id="6HCM"/>
<dbReference type="PDBsum" id="6HCQ"/>
<dbReference type="PDBsum" id="6MTB"/>
<dbReference type="PDBsum" id="6MTC"/>
<dbReference type="PDBsum" id="6MTD"/>
<dbReference type="PDBsum" id="6MTE"/>
<dbReference type="PDBsum" id="6P5I"/>
<dbReference type="PDBsum" id="6P5J"/>
<dbReference type="PDBsum" id="6P5N"/>
<dbReference type="PDBsum" id="6R5Q"/>
<dbReference type="PDBsum" id="6R6G"/>
<dbReference type="PDBsum" id="6R6P"/>
<dbReference type="PDBsum" id="6R7Q"/>
<dbReference type="PDBsum" id="6SGC"/>
<dbReference type="PDBsum" id="6T59"/>
<dbReference type="PDBsum" id="6ZVK"/>
<dbReference type="PDBsum" id="7A01"/>
<dbReference type="PDBsum" id="7MDZ"/>
<dbReference type="PDBsum" id="7NFX"/>
<dbReference type="PDBsum" id="7NWG"/>
<dbReference type="PDBsum" id="7NWH"/>
<dbReference type="PDBsum" id="7NWI"/>
<dbReference type="PDBsum" id="7O7Y"/>
<dbReference type="PDBsum" id="7O7Z"/>
<dbReference type="PDBsum" id="7O80"/>
<dbReference type="PDBsum" id="7O81"/>
<dbReference type="PDBsum" id="7OBR"/>
<dbReference type="PDBsum" id="7OYD"/>
<dbReference type="PDBsum" id="7QWQ"/>
<dbReference type="PDBsum" id="7QWR"/>
<dbReference type="PDBsum" id="7QWS"/>
<dbReference type="PDBsum" id="7TM3"/>
<dbReference type="PDBsum" id="7TOQ"/>
<dbReference type="PDBsum" id="7TOR"/>
<dbReference type="PDBsum" id="7TUT"/>
<dbReference type="PDBsum" id="7UCJ"/>
<dbReference type="PDBsum" id="7UCK"/>
<dbReference type="PDBsum" id="7ZJW"/>
<dbReference type="PDBsum" id="7ZJX"/>
<dbReference type="PDBsum" id="8B5L"/>
<dbReference type="PDBsum" id="8B6C"/>
<dbReference type="PDBsum" id="8BHF"/>
<dbReference type="PDBsum" id="8BPO"/>
<dbReference type="PDBsum" id="8BTK"/>
<dbReference type="PDBsum" id="8P2K"/>
<dbReference type="PDBsum" id="8RJB"/>
<dbReference type="PDBsum" id="8RJC"/>
<dbReference type="PDBsum" id="8RJD"/>
<dbReference type="PDBsum" id="8SCB"/>
<dbReference type="PDBsum" id="8VFT"/>
<dbReference type="PDBsum" id="9BDL"/>
<dbReference type="PDBsum" id="9BDN"/>
<dbReference type="PDBsum" id="9BDP"/>
<dbReference type="PDBsum" id="9F1B"/>
<dbReference type="PDBsum" id="9F1C"/>
<dbReference type="PDBsum" id="9F1D"/>
<dbReference type="EMDB" id="EMD-0099"/>
<dbReference type="EMDB" id="EMD-0100"/>
<dbReference type="EMDB" id="EMD-0192"/>
<dbReference type="EMDB" id="EMD-0194"/>
<dbReference type="EMDB" id="EMD-0195"/>
<dbReference type="EMDB" id="EMD-0197"/>
<dbReference type="EMDB" id="EMD-10181"/>
<dbReference type="EMDB" id="EMD-10380"/>
<dbReference type="EMDB" id="EMD-11459"/>
<dbReference type="EMDB" id="EMD-11590"/>
<dbReference type="EMDB" id="EMD-12303"/>
<dbReference type="EMDB" id="EMD-12631"/>
<dbReference type="EMDB" id="EMD-12632"/>
<dbReference type="EMDB" id="EMD-12633"/>
<dbReference type="EMDB" id="EMD-12756"/>
<dbReference type="EMDB" id="EMD-12757"/>
<dbReference type="EMDB" id="EMD-12758"/>
<dbReference type="EMDB" id="EMD-12759"/>
<dbReference type="EMDB" id="EMD-12801"/>
<dbReference type="EMDB" id="EMD-13114"/>
<dbReference type="EMDB" id="EMD-14191"/>
<dbReference type="EMDB" id="EMD-14192"/>
<dbReference type="EMDB" id="EMD-14193"/>
<dbReference type="EMDB" id="EMD-14751"/>
<dbReference type="EMDB" id="EMD-14752"/>
<dbReference type="EMDB" id="EMD-15860"/>
<dbReference type="EMDB" id="EMD-15863"/>
<dbReference type="EMDB" id="EMD-16052"/>
<dbReference type="EMDB" id="EMD-16155"/>
<dbReference type="EMDB" id="EMD-16232"/>
<dbReference type="EMDB" id="EMD-17367"/>
<dbReference type="EMDB" id="EMD-19195"/>
<dbReference type="EMDB" id="EMD-19197"/>
<dbReference type="EMDB" id="EMD-19198"/>
<dbReference type="EMDB" id="EMD-20255"/>
<dbReference type="EMDB" id="EMD-20256"/>
<dbReference type="EMDB" id="EMD-20257"/>
<dbReference type="EMDB" id="EMD-20258"/>
<dbReference type="EMDB" id="EMD-23785"/>
<dbReference type="EMDB" id="EMD-25994"/>
<dbReference type="EMDB" id="EMD-26035"/>
<dbReference type="EMDB" id="EMD-26036"/>
<dbReference type="EMDB" id="EMD-26133"/>
<dbReference type="EMDB" id="EMD-26444"/>
<dbReference type="EMDB" id="EMD-26445"/>
<dbReference type="EMDB" id="EMD-40344"/>
<dbReference type="EMDB" id="EMD-4130"/>
<dbReference type="EMDB" id="EMD-4131"/>
<dbReference type="EMDB" id="EMD-4132"/>
<dbReference type="EMDB" id="EMD-4133"/>
<dbReference type="EMDB" id="EMD-4134"/>
<dbReference type="EMDB" id="EMD-4135"/>
<dbReference type="EMDB" id="EMD-4136"/>
<dbReference type="EMDB" id="EMD-4137"/>
<dbReference type="EMDB" id="EMD-4300"/>
<dbReference type="EMDB" id="EMD-4315"/>
<dbReference type="EMDB" id="EMD-4316"/>
<dbReference type="EMDB" id="EMD-4317"/>
<dbReference type="EMDB" id="EMD-43189"/>
<dbReference type="EMDB" id="EMD-44461"/>
<dbReference type="EMDB" id="EMD-44463"/>
<dbReference type="EMDB" id="EMD-44464"/>
<dbReference type="EMDB" id="EMD-4729"/>
<dbReference type="EMDB" id="EMD-4735"/>
<dbReference type="EMDB" id="EMD-4737"/>
<dbReference type="EMDB" id="EMD-4745"/>
<dbReference type="EMDB" id="EMD-50124"/>
<dbReference type="EMDB" id="EMD-50125"/>
<dbReference type="EMDB" id="EMD-50126"/>
<dbReference type="EMDB" id="EMD-7834"/>
<dbReference type="EMDB" id="EMD-7836"/>
<dbReference type="EMDB" id="EMD-9237"/>
<dbReference type="EMDB" id="EMD-9239"/>
<dbReference type="EMDB" id="EMD-9240"/>
<dbReference type="EMDB" id="EMD-9242"/>
<dbReference type="SMR" id="G1TL06"/>
<dbReference type="IntAct" id="G1TL06">
    <property type="interactions" value="1"/>
</dbReference>
<dbReference type="PaxDb" id="9986-ENSOCUP00000017650"/>
<dbReference type="Ensembl" id="ENSOCUT00000023183.3">
    <property type="protein sequence ID" value="ENSOCUP00000017650.2"/>
    <property type="gene ID" value="ENSOCUG00000027712.3"/>
</dbReference>
<dbReference type="GeneID" id="100358512"/>
<dbReference type="KEGG" id="ocu:100358512"/>
<dbReference type="CTD" id="6122"/>
<dbReference type="eggNOG" id="KOG0746">
    <property type="taxonomic scope" value="Eukaryota"/>
</dbReference>
<dbReference type="GeneTree" id="ENSGT00390000017606"/>
<dbReference type="HOGENOM" id="CLU_033361_2_1_1"/>
<dbReference type="OrthoDB" id="1611972at2759"/>
<dbReference type="TreeFam" id="TF300555"/>
<dbReference type="Proteomes" id="UP000001811">
    <property type="component" value="Chromosome 4"/>
</dbReference>
<dbReference type="Bgee" id="ENSOCUG00000027712">
    <property type="expression patterns" value="Expressed in uterus and 16 other cell types or tissues"/>
</dbReference>
<dbReference type="GO" id="GO:0022625">
    <property type="term" value="C:cytosolic large ribosomal subunit"/>
    <property type="evidence" value="ECO:0007669"/>
    <property type="project" value="TreeGrafter"/>
</dbReference>
<dbReference type="GO" id="GO:0005730">
    <property type="term" value="C:nucleolus"/>
    <property type="evidence" value="ECO:0007669"/>
    <property type="project" value="UniProtKB-SubCell"/>
</dbReference>
<dbReference type="GO" id="GO:0003723">
    <property type="term" value="F:RNA binding"/>
    <property type="evidence" value="ECO:0007669"/>
    <property type="project" value="TreeGrafter"/>
</dbReference>
<dbReference type="GO" id="GO:0003735">
    <property type="term" value="F:structural constituent of ribosome"/>
    <property type="evidence" value="ECO:0007669"/>
    <property type="project" value="InterPro"/>
</dbReference>
<dbReference type="GO" id="GO:0006412">
    <property type="term" value="P:translation"/>
    <property type="evidence" value="ECO:0007669"/>
    <property type="project" value="InterPro"/>
</dbReference>
<dbReference type="FunFam" id="2.40.30.10:FF:000079">
    <property type="entry name" value="60S ribosomal protein L3"/>
    <property type="match status" value="1"/>
</dbReference>
<dbReference type="FunFam" id="3.30.1430.10:FF:000001">
    <property type="entry name" value="60S ribosomal protein L3"/>
    <property type="match status" value="1"/>
</dbReference>
<dbReference type="FunFam" id="4.10.960.10:FF:000002">
    <property type="entry name" value="60S ribosomal protein L3"/>
    <property type="match status" value="1"/>
</dbReference>
<dbReference type="FunFam" id="4.10.960.10:FF:000004">
    <property type="entry name" value="60S ribosomal protein L3"/>
    <property type="match status" value="1"/>
</dbReference>
<dbReference type="FunFam" id="2.40.30.10:FF:000351">
    <property type="entry name" value="Ribosomal protein L3"/>
    <property type="match status" value="1"/>
</dbReference>
<dbReference type="Gene3D" id="3.30.1430.10">
    <property type="match status" value="1"/>
</dbReference>
<dbReference type="Gene3D" id="4.10.960.10">
    <property type="entry name" value="Ribosomal protein L3, domain 3"/>
    <property type="match status" value="1"/>
</dbReference>
<dbReference type="Gene3D" id="2.40.30.10">
    <property type="entry name" value="Translation factors"/>
    <property type="match status" value="1"/>
</dbReference>
<dbReference type="InterPro" id="IPR045077">
    <property type="entry name" value="L3_arc_euk"/>
</dbReference>
<dbReference type="InterPro" id="IPR044892">
    <property type="entry name" value="Ribosomal_L3_dom_3_arc_sf"/>
</dbReference>
<dbReference type="InterPro" id="IPR000597">
    <property type="entry name" value="Ribosomal_uL3"/>
</dbReference>
<dbReference type="InterPro" id="IPR019926">
    <property type="entry name" value="Ribosomal_uL3_CS"/>
</dbReference>
<dbReference type="InterPro" id="IPR009000">
    <property type="entry name" value="Transl_B-barrel_sf"/>
</dbReference>
<dbReference type="PANTHER" id="PTHR11363">
    <property type="entry name" value="60S RIBOSOMAL PROTEIN L3-RELATED"/>
    <property type="match status" value="1"/>
</dbReference>
<dbReference type="PANTHER" id="PTHR11363:SF4">
    <property type="entry name" value="LARGE RIBOSOMAL SUBUNIT PROTEIN UL3"/>
    <property type="match status" value="1"/>
</dbReference>
<dbReference type="Pfam" id="PF00297">
    <property type="entry name" value="Ribosomal_L3"/>
    <property type="match status" value="1"/>
</dbReference>
<dbReference type="SUPFAM" id="SSF50447">
    <property type="entry name" value="Translation proteins"/>
    <property type="match status" value="1"/>
</dbReference>
<dbReference type="PROSITE" id="PS00474">
    <property type="entry name" value="RIBOSOMAL_L3"/>
    <property type="match status" value="1"/>
</dbReference>
<gene>
    <name type="primary">RPL3</name>
</gene>
<evidence type="ECO:0000250" key="1">
    <source>
        <dbReference type="UniProtKB" id="P27659"/>
    </source>
</evidence>
<evidence type="ECO:0000250" key="2">
    <source>
        <dbReference type="UniProtKB" id="P39023"/>
    </source>
</evidence>
<evidence type="ECO:0000256" key="3">
    <source>
        <dbReference type="SAM" id="MobiDB-lite"/>
    </source>
</evidence>
<evidence type="ECO:0000269" key="4">
    <source>
    </source>
</evidence>
<evidence type="ECO:0000269" key="5">
    <source>
    </source>
</evidence>
<evidence type="ECO:0000269" key="6">
    <source>
    </source>
</evidence>
<evidence type="ECO:0000269" key="7">
    <source>
    </source>
</evidence>
<evidence type="ECO:0000269" key="8">
    <source>
    </source>
</evidence>
<evidence type="ECO:0000269" key="9">
    <source>
    </source>
</evidence>
<evidence type="ECO:0000269" key="10">
    <source>
    </source>
</evidence>
<evidence type="ECO:0000269" key="11">
    <source>
    </source>
</evidence>
<evidence type="ECO:0000269" key="12">
    <source>
    </source>
</evidence>
<evidence type="ECO:0000269" key="13">
    <source>
    </source>
</evidence>
<evidence type="ECO:0000269" key="14">
    <source>
    </source>
</evidence>
<evidence type="ECO:0000269" key="15">
    <source>
    </source>
</evidence>
<evidence type="ECO:0000305" key="16"/>
<evidence type="ECO:0007744" key="17">
    <source>
        <dbReference type="PDB" id="3JAG"/>
    </source>
</evidence>
<evidence type="ECO:0007744" key="18">
    <source>
        <dbReference type="PDB" id="3JAH"/>
    </source>
</evidence>
<evidence type="ECO:0007744" key="19">
    <source>
        <dbReference type="PDB" id="5LZS"/>
    </source>
</evidence>
<evidence type="ECO:0007744" key="20">
    <source>
        <dbReference type="PDB" id="5LZT"/>
    </source>
</evidence>
<evidence type="ECO:0007744" key="21">
    <source>
        <dbReference type="PDB" id="6D90"/>
    </source>
</evidence>
<evidence type="ECO:0007744" key="22">
    <source>
        <dbReference type="PDB" id="6D9J"/>
    </source>
</evidence>
<evidence type="ECO:0007744" key="23">
    <source>
        <dbReference type="PDB" id="6HCF"/>
    </source>
</evidence>
<evidence type="ECO:0007744" key="24">
    <source>
        <dbReference type="PDB" id="6HCJ"/>
    </source>
</evidence>
<evidence type="ECO:0007744" key="25">
    <source>
        <dbReference type="PDB" id="6MTB"/>
    </source>
</evidence>
<evidence type="ECO:0007744" key="26">
    <source>
        <dbReference type="PDB" id="6MTC"/>
    </source>
</evidence>
<evidence type="ECO:0007744" key="27">
    <source>
        <dbReference type="PDB" id="6P5I"/>
    </source>
</evidence>
<evidence type="ECO:0007744" key="28">
    <source>
        <dbReference type="PDB" id="6P5J"/>
    </source>
</evidence>
<evidence type="ECO:0007744" key="29">
    <source>
        <dbReference type="PDB" id="6R5Q"/>
    </source>
</evidence>
<evidence type="ECO:0007744" key="30">
    <source>
        <dbReference type="PDB" id="6R6G"/>
    </source>
</evidence>
<evidence type="ECO:0007744" key="31">
    <source>
        <dbReference type="PDB" id="6SGC"/>
    </source>
</evidence>
<evidence type="ECO:0007744" key="32">
    <source>
        <dbReference type="PDB" id="6ZVK"/>
    </source>
</evidence>
<evidence type="ECO:0007744" key="33">
    <source>
        <dbReference type="PDB" id="7A01"/>
    </source>
</evidence>
<evidence type="ECO:0007744" key="34">
    <source>
        <dbReference type="PDB" id="7OYD"/>
    </source>
</evidence>
<evidence type="ECO:0007744" key="35">
    <source>
        <dbReference type="PDB" id="7UCJ"/>
    </source>
</evidence>
<evidence type="ECO:0007744" key="36">
    <source>
        <dbReference type="PDB" id="7UCK"/>
    </source>
</evidence>
<evidence type="ECO:0007744" key="37">
    <source>
        <dbReference type="PDB" id="7ZJW"/>
    </source>
</evidence>
<evidence type="ECO:0007744" key="38">
    <source>
        <dbReference type="PDB" id="7ZJX"/>
    </source>
</evidence>
<organism>
    <name type="scientific">Oryctolagus cuniculus</name>
    <name type="common">Rabbit</name>
    <dbReference type="NCBI Taxonomy" id="9986"/>
    <lineage>
        <taxon>Eukaryota</taxon>
        <taxon>Metazoa</taxon>
        <taxon>Chordata</taxon>
        <taxon>Craniata</taxon>
        <taxon>Vertebrata</taxon>
        <taxon>Euteleostomi</taxon>
        <taxon>Mammalia</taxon>
        <taxon>Eutheria</taxon>
        <taxon>Euarchontoglires</taxon>
        <taxon>Glires</taxon>
        <taxon>Lagomorpha</taxon>
        <taxon>Leporidae</taxon>
        <taxon>Oryctolagus</taxon>
    </lineage>
</organism>
<keyword id="KW-0002">3D-structure</keyword>
<keyword id="KW-0007">Acetylation</keyword>
<keyword id="KW-0963">Cytoplasm</keyword>
<keyword id="KW-1017">Isopeptide bond</keyword>
<keyword id="KW-0488">Methylation</keyword>
<keyword id="KW-0539">Nucleus</keyword>
<keyword id="KW-0597">Phosphoprotein</keyword>
<keyword id="KW-1185">Reference proteome</keyword>
<keyword id="KW-0687">Ribonucleoprotein</keyword>
<keyword id="KW-0689">Ribosomal protein</keyword>
<keyword id="KW-0832">Ubl conjugation</keyword>
<proteinExistence type="evidence at protein level"/>
<accession>G1TL06</accession>
<protein>
    <recommendedName>
        <fullName>Large ribosomal subunit protein uL3</fullName>
    </recommendedName>
    <alternativeName>
        <fullName>60S ribosomal protein L3</fullName>
    </alternativeName>
</protein>
<name>RL3_RABIT</name>
<feature type="initiator methionine" description="Removed" evidence="2">
    <location>
        <position position="1"/>
    </location>
</feature>
<feature type="chain" id="PRO_0000460089" description="Large ribosomal subunit protein uL3">
    <location>
        <begin position="2"/>
        <end position="403"/>
    </location>
</feature>
<feature type="region of interest" description="Disordered" evidence="3">
    <location>
        <begin position="1"/>
        <end position="37"/>
    </location>
</feature>
<feature type="compositionally biased region" description="Basic residues" evidence="3">
    <location>
        <begin position="18"/>
        <end position="31"/>
    </location>
</feature>
<feature type="modified residue" description="Phosphoserine" evidence="2">
    <location>
        <position position="13"/>
    </location>
</feature>
<feature type="modified residue" description="N6-acetyllysine" evidence="1">
    <location>
        <position position="136"/>
    </location>
</feature>
<feature type="modified residue" description="Tele-methylhistidine" evidence="2">
    <location>
        <position position="245"/>
    </location>
</feature>
<feature type="modified residue" description="N6-acetyllysine; alternate" evidence="1">
    <location>
        <position position="286"/>
    </location>
</feature>
<feature type="modified residue" description="N6-acetyllysine; alternate" evidence="2">
    <location>
        <position position="294"/>
    </location>
</feature>
<feature type="modified residue" description="Phosphoserine" evidence="2">
    <location>
        <position position="304"/>
    </location>
</feature>
<feature type="modified residue" description="N6-acetyllysine; alternate" evidence="2">
    <location>
        <position position="366"/>
    </location>
</feature>
<feature type="modified residue" description="N6-acetyllysine" evidence="1">
    <location>
        <position position="373"/>
    </location>
</feature>
<feature type="cross-link" description="Glycyl lysine isopeptide (Lys-Gly) (interchain with G-Cter in SUMO2)" evidence="2">
    <location>
        <position position="39"/>
    </location>
</feature>
<feature type="cross-link" description="Glycyl lysine isopeptide (Lys-Gly) (interchain with G-Cter in SUMO2)" evidence="2">
    <location>
        <position position="224"/>
    </location>
</feature>
<feature type="cross-link" description="Glycyl lysine isopeptide (Lys-Gly) (interchain with G-Cter in SUMO2)" evidence="2">
    <location>
        <position position="226"/>
    </location>
</feature>
<feature type="cross-link" description="Glycyl lysine isopeptide (Lys-Gly) (interchain with G-Cter in SUMO2); alternate" evidence="2">
    <location>
        <position position="286"/>
    </location>
</feature>
<feature type="cross-link" description="Glycyl lysine isopeptide (Lys-Gly) (interchain with G-Cter in SUMO1); alternate" evidence="2">
    <location>
        <position position="294"/>
    </location>
</feature>
<feature type="cross-link" description="Glycyl lysine isopeptide (Lys-Gly) (interchain with G-Cter in SUMO2); alternate" evidence="2">
    <location>
        <position position="366"/>
    </location>
</feature>
<feature type="cross-link" description="Glycyl lysine isopeptide (Lys-Gly) (interchain with G-Cter in SUMO2)" evidence="2">
    <location>
        <position position="386"/>
    </location>
</feature>
<feature type="cross-link" description="Glycyl lysine isopeptide (Lys-Gly) (interchain with G-Cter in SUMO2)" evidence="2">
    <location>
        <position position="393"/>
    </location>
</feature>
<feature type="cross-link" description="Glycyl lysine isopeptide (Lys-Gly) (interchain with G-Cter in SUMO2)" evidence="2">
    <location>
        <position position="399"/>
    </location>
</feature>
<reference key="1">
    <citation type="journal article" date="2011" name="Nature">
        <title>A high-resolution map of human evolutionary constraint using 29 mammals.</title>
        <authorList>
            <person name="Lindblad-Toh K."/>
            <person name="Garber M."/>
            <person name="Zuk O."/>
            <person name="Lin M.F."/>
            <person name="Parker B.J."/>
            <person name="Washietl S."/>
            <person name="Kheradpour P."/>
            <person name="Ernst J."/>
            <person name="Jordan G."/>
            <person name="Mauceli E."/>
            <person name="Ward L.D."/>
            <person name="Lowe C.B."/>
            <person name="Holloway A.K."/>
            <person name="Clamp M."/>
            <person name="Gnerre S."/>
            <person name="Alfoldi J."/>
            <person name="Beal K."/>
            <person name="Chang J."/>
            <person name="Clawson H."/>
            <person name="Cuff J."/>
            <person name="Di Palma F."/>
            <person name="Fitzgerald S."/>
            <person name="Flicek P."/>
            <person name="Guttman M."/>
            <person name="Hubisz M.J."/>
            <person name="Jaffe D.B."/>
            <person name="Jungreis I."/>
            <person name="Kent W.J."/>
            <person name="Kostka D."/>
            <person name="Lara M."/>
            <person name="Martins A.L."/>
            <person name="Massingham T."/>
            <person name="Moltke I."/>
            <person name="Raney B.J."/>
            <person name="Rasmussen M.D."/>
            <person name="Robinson J."/>
            <person name="Stark A."/>
            <person name="Vilella A.J."/>
            <person name="Wen J."/>
            <person name="Xie X."/>
            <person name="Zody M.C."/>
            <person name="Baldwin J."/>
            <person name="Bloom T."/>
            <person name="Chin C.W."/>
            <person name="Heiman D."/>
            <person name="Nicol R."/>
            <person name="Nusbaum C."/>
            <person name="Young S."/>
            <person name="Wilkinson J."/>
            <person name="Worley K.C."/>
            <person name="Kovar C.L."/>
            <person name="Muzny D.M."/>
            <person name="Gibbs R.A."/>
            <person name="Cree A."/>
            <person name="Dihn H.H."/>
            <person name="Fowler G."/>
            <person name="Jhangiani S."/>
            <person name="Joshi V."/>
            <person name="Lee S."/>
            <person name="Lewis L.R."/>
            <person name="Nazareth L.V."/>
            <person name="Okwuonu G."/>
            <person name="Santibanez J."/>
            <person name="Warren W.C."/>
            <person name="Mardis E.R."/>
            <person name="Weinstock G.M."/>
            <person name="Wilson R.K."/>
            <person name="Delehaunty K."/>
            <person name="Dooling D."/>
            <person name="Fronik C."/>
            <person name="Fulton L."/>
            <person name="Fulton B."/>
            <person name="Graves T."/>
            <person name="Minx P."/>
            <person name="Sodergren E."/>
            <person name="Birney E."/>
            <person name="Margulies E.H."/>
            <person name="Herrero J."/>
            <person name="Green E.D."/>
            <person name="Haussler D."/>
            <person name="Siepel A."/>
            <person name="Goldman N."/>
            <person name="Pollard K.S."/>
            <person name="Pedersen J.S."/>
            <person name="Lander E.S."/>
            <person name="Kellis M."/>
        </authorList>
    </citation>
    <scope>NUCLEOTIDE SEQUENCE [LARGE SCALE GENOMIC DNA]</scope>
    <source>
        <strain>Thorbecke</strain>
    </source>
</reference>
<reference evidence="17 18" key="2">
    <citation type="journal article" date="2015" name="Nature">
        <title>Structural basis for stop codon recognition in eukaryotes.</title>
        <authorList>
            <person name="Brown A."/>
            <person name="Shao S."/>
            <person name="Murray J."/>
            <person name="Hegde R.S."/>
            <person name="Ramakrishnan V."/>
        </authorList>
    </citation>
    <scope>STRUCTURE BY ELECTRON MICROSCOPY (3.45 ANGSTROMS) OF 2-395 OF RIBOSOME</scope>
    <scope>FUNCTION</scope>
    <scope>SUBCELLULAR LOCATION</scope>
    <scope>SUBUNIT</scope>
</reference>
<reference evidence="19 20" key="3">
    <citation type="journal article" date="2016" name="Cell">
        <title>Decoding mammalian ribosome-mRNA states by translational GTPase complexes.</title>
        <authorList>
            <person name="Shao S."/>
            <person name="Murray J."/>
            <person name="Brown A."/>
            <person name="Taunton J."/>
            <person name="Ramakrishnan V."/>
            <person name="Hegde R.S."/>
        </authorList>
    </citation>
    <scope>STRUCTURE BY ELECTRON MICROSCOPY (3.31 ANGSTROMS) OF RIBOSOME</scope>
    <scope>FUNCTION</scope>
    <scope>SUBCELLULAR LOCATION</scope>
    <scope>SUBUNIT</scope>
</reference>
<reference evidence="21 22" key="4">
    <citation type="journal article" date="2018" name="Elife">
        <title>Dual tRNA mimicry in the Cricket paralysis virus IRES uncovers an unexpected similarity with the Hepatitis C Virus IRES.</title>
        <authorList>
            <person name="Pisareva V.P."/>
            <person name="Pisarev A.V."/>
            <person name="Fernandez I.S."/>
        </authorList>
    </citation>
    <scope>STRUCTURE BY ELECTRON MICROSCOPY (3.20 ANGSTROMS) OF RIBOSOME</scope>
    <scope>SUBCELLULAR LOCATION</scope>
    <scope>SUBUNIT</scope>
</reference>
<reference evidence="25 26" key="5">
    <citation type="journal article" date="2018" name="Elife">
        <title>Structures of translationally inactive mammalian ribosomes.</title>
        <authorList>
            <person name="Brown A."/>
            <person name="Baird M.R."/>
            <person name="Yip M.C."/>
            <person name="Murray J."/>
            <person name="Shao S."/>
        </authorList>
    </citation>
    <scope>STRUCTURE BY ELECTRON MICROSCOPY (3.30 ANGSTROMS) OF 2-395 OF RIBOSOME</scope>
    <scope>SUBCELLULAR LOCATION</scope>
    <scope>SUBUNIT</scope>
</reference>
<reference evidence="23 24" key="6">
    <citation type="journal article" date="2018" name="Mol. Cell">
        <title>ZNF598 is a quality control sensor of collided ribosomes.</title>
        <authorList>
            <person name="Juszkiewicz S."/>
            <person name="Chandrasekaran V."/>
            <person name="Lin Z."/>
            <person name="Kraatz S."/>
            <person name="Ramakrishnan V."/>
            <person name="Hegde R.S."/>
        </authorList>
    </citation>
    <scope>STRUCTURE BY ELECTRON MICROSCOPY (3.80 ANGSTROMS) OF RIBOSOME</scope>
    <scope>SUBCELLULAR LOCATION</scope>
    <scope>SUBUNIT</scope>
</reference>
<reference evidence="29 30" key="7">
    <citation type="journal article" date="2019" name="Elife">
        <title>Structural and mutational analysis of the ribosome-arresting human XBP1u.</title>
        <authorList>
            <person name="Shanmuganathan V."/>
            <person name="Schiller N."/>
            <person name="Magoulopoulou A."/>
            <person name="Cheng J."/>
            <person name="Braunger K."/>
            <person name="Cymer F."/>
            <person name="Berninghausen O."/>
            <person name="Beatrix B."/>
            <person name="Kohno K."/>
            <person name="von Heijne G."/>
            <person name="Beckmann R."/>
        </authorList>
    </citation>
    <scope>STRUCTURE BY ELECTRON MICROSCOPY (3.00 ANGSTROMS) OF 2-395 OF RIBOSOME</scope>
    <scope>SUBCELLULAR LOCATION</scope>
    <scope>SUBUNIT</scope>
</reference>
<reference evidence="27 28" key="8">
    <citation type="journal article" date="2019" name="EMBO J.">
        <title>The Israeli acute paralysis virus IRES captures host ribosomes by mimicking a ribosomal state with hybrid tRNAs.</title>
        <authorList>
            <person name="Acosta-Reyes F."/>
            <person name="Neupane R."/>
            <person name="Frank J."/>
            <person name="Fernandez I.S."/>
        </authorList>
    </citation>
    <scope>STRUCTURE BY ELECTRON MICROSCOPY (3.10 ANGSTROMS) OF RIBOSOME</scope>
    <scope>SUBUNIT</scope>
    <scope>SUBCELLULAR LOCATION</scope>
</reference>
<reference evidence="31" key="9">
    <citation type="journal article" date="2019" name="Nat. Struct. Mol. Biol.">
        <title>Mechanism of ribosome stalling during translation of a poly(A) tail.</title>
        <authorList>
            <person name="Chandrasekaran V."/>
            <person name="Juszkiewicz S."/>
            <person name="Choi J."/>
            <person name="Puglisi J.D."/>
            <person name="Brown A."/>
            <person name="Shao S."/>
            <person name="Ramakrishnan V."/>
            <person name="Hegde R.S."/>
        </authorList>
    </citation>
    <scope>STRUCTURE BY ELECTRON MICROSCOPY (2.80 ANGSTROMS) OF RIBOSOME</scope>
    <scope>SUBCELLULAR LOCATION</scope>
    <scope>SUBUNIT</scope>
</reference>
<reference evidence="32 33" key="10">
    <citation type="journal article" date="2020" name="Cell Rep.">
        <title>The Halastavi arva virus intergenic region IRES promotes translation by the simplest possible initiation mechanism.</title>
        <authorList>
            <person name="Abaeva I.S."/>
            <person name="Vicens Q."/>
            <person name="Bochler A."/>
            <person name="Soufari H."/>
            <person name="Simonetti A."/>
            <person name="Pestova T.V."/>
            <person name="Hashem Y."/>
            <person name="Hellen C.U.T."/>
        </authorList>
    </citation>
    <scope>STRUCTURE BY ELECTRON MICROSCOPY (3.49 ANGSTROMS) OF RIBOSOME</scope>
    <scope>SUBCELLULAR LOCATION</scope>
    <scope>SUBUNIT</scope>
</reference>
<reference evidence="35 36" key="11">
    <citation type="journal article" date="2022" name="Mol. Cell">
        <title>Direct epitranscriptomic regulation of mammalian translation initiation through N4-acetylcytidine.</title>
        <authorList>
            <person name="Arango D."/>
            <person name="Sturgill D."/>
            <person name="Yang R."/>
            <person name="Kanai T."/>
            <person name="Bauer P."/>
            <person name="Roy J."/>
            <person name="Wang Z."/>
            <person name="Hosogane M."/>
            <person name="Schiffers S."/>
            <person name="Oberdoerffer S."/>
        </authorList>
    </citation>
    <scope>STRUCTURE BY ELECTRON MICROSCOPY (2.80 ANGSTROMS) OF RIBOSOME</scope>
    <scope>SUBCELLULAR LOCATION</scope>
    <scope>SUBUNIT</scope>
</reference>
<reference evidence="37 38" key="12">
    <citation type="journal article" date="2022" name="Science">
        <title>Structure of the mammalian ribosome as it decodes the selenocysteine UGA codon.</title>
        <authorList>
            <person name="Hilal T."/>
            <person name="Killam B.Y."/>
            <person name="Grozdanovic M."/>
            <person name="Dobosz-Bartoszek M."/>
            <person name="Loerke J."/>
            <person name="Buerger J."/>
            <person name="Mielke T."/>
            <person name="Copeland P.R."/>
            <person name="Simonovic M."/>
            <person name="Spahn C.M.T."/>
        </authorList>
    </citation>
    <scope>STRUCTURE BY ELECTRON MICROSCOPY (2.80 ANGSTROMS) OF RIBOSOME</scope>
    <scope>SUBCELLULAR LOCATION</scope>
    <scope>SUBUNIT</scope>
</reference>
<reference evidence="34" key="13">
    <citation type="journal article" date="2023" name="Nature">
        <title>A molecular network of conserved factors keeps ribosomes dormant in the egg.</title>
        <authorList>
            <person name="Leesch F."/>
            <person name="Lorenzo-Orts L."/>
            <person name="Pribitzer C."/>
            <person name="Grishkovskaya I."/>
            <person name="Roehsner J."/>
            <person name="Chugunova A."/>
            <person name="Matzinger M."/>
            <person name="Roitinger E."/>
            <person name="Belacic K."/>
            <person name="Kandolf S."/>
            <person name="Lin T.Y."/>
            <person name="Mechtler K."/>
            <person name="Meinhart A."/>
            <person name="Haselbach D."/>
            <person name="Pauli A."/>
        </authorList>
    </citation>
    <scope>STRUCTURE BY ELECTRON MICROSCOPY (2.30 ANGSTROMS) OF RIBOSOME</scope>
    <scope>SUBCELLULAR LOCATION</scope>
    <scope>SUBUNIT</scope>
</reference>
<comment type="function">
    <text evidence="4 5">Component of the large ribosomal subunit (PubMed:26245381, PubMed:27863242). The ribosome is a large ribonucleoprotein complex responsible for the synthesis of proteins in the cell (PubMed:26245381, PubMed:27863242).</text>
</comment>
<comment type="subunit">
    <text evidence="2 4 5 6 7 8 9 10 11 12 13 14 15">Component of the large ribosomal subunit (PubMed:26245381, PubMed:27863242, PubMed:29856316, PubMed:30293783, PubMed:30355441, PubMed:31246176, PubMed:31609474, PubMed:31768042, PubMed:33296660, PubMed:35679869, PubMed:35709277, PubMed:36653451). Interacts with DHX33 (By similarity).</text>
</comment>
<comment type="subcellular location">
    <subcellularLocation>
        <location evidence="2">Nucleus</location>
        <location evidence="2">Nucleolus</location>
    </subcellularLocation>
    <subcellularLocation>
        <location evidence="4 5 6 7 8 9 10 11 12 13 14 15">Cytoplasm</location>
    </subcellularLocation>
</comment>
<comment type="PTM">
    <text evidence="2">Constitutively monomethylated at His-245 by METTL18. Methylation at His-245 regulates translation elongation by slowing ribosome traversal on tyrosine codons: slower elongation provides enough time for proper folding of synthesized proteins and prevents cellular aggregation of tyrosine-rich proteins. It is not required for incorporation of RPL3 into ribosomes.</text>
</comment>
<comment type="similarity">
    <text evidence="16">Belongs to the universal ribosomal protein uL3 family.</text>
</comment>
<sequence length="403" mass="46006">MSHRKFSAPRHGSLGFLPRKRSSRHRGKVKSFPKDDPSKPVHLTAFLGYKAGMTHIVREVDRPGSKVNKKEVVEAVTIVETPPMVVVGIVGYVETPRGLRTFKTVFAEHISDECKRRFYKNWHKSKKKAFTKYCKKWQDDAGKRQLDKDFSSMKKYCQVIRVLAHTQMRLLPLRQKKAHLMEIQVNGGTVAEKLDWARERLEQQVPVSQVFGQDEMIDVIGVTKGKGYKGVTSRWHTKKLPRKTHRGLRKVACIGAWHPARVAFSVARAGQKGYHHRTEINKKIYKIGQGYLIKDGKLIKNNASTDYDLSDKSINPLGGFVHYGEVTNDFVMLKGCVVGTKKRVLTLRKSLLVQTKRRALEKIDLKFIDTTSKFGHGRFQTVEEKKAFMGPLKKDRIAKEEGA</sequence>